<feature type="chain" id="PRO_0000248602" description="BRD4-interacting chromatin-remodeling complex-associated protein-like">
    <location>
        <begin position="1"/>
        <end position="1079"/>
    </location>
</feature>
<feature type="region of interest" description="Disordered" evidence="1">
    <location>
        <begin position="51"/>
        <end position="79"/>
    </location>
</feature>
<feature type="region of interest" description="Disordered" evidence="1">
    <location>
        <begin position="509"/>
        <end position="604"/>
    </location>
</feature>
<feature type="region of interest" description="Disordered" evidence="1">
    <location>
        <begin position="669"/>
        <end position="691"/>
    </location>
</feature>
<feature type="region of interest" description="Disordered" evidence="1">
    <location>
        <begin position="837"/>
        <end position="877"/>
    </location>
</feature>
<feature type="region of interest" description="Disordered" evidence="1">
    <location>
        <begin position="917"/>
        <end position="954"/>
    </location>
</feature>
<feature type="compositionally biased region" description="Low complexity" evidence="1">
    <location>
        <begin position="68"/>
        <end position="79"/>
    </location>
</feature>
<feature type="compositionally biased region" description="Polar residues" evidence="1">
    <location>
        <begin position="544"/>
        <end position="576"/>
    </location>
</feature>
<feature type="compositionally biased region" description="Low complexity" evidence="1">
    <location>
        <begin position="590"/>
        <end position="604"/>
    </location>
</feature>
<feature type="compositionally biased region" description="Basic and acidic residues" evidence="1">
    <location>
        <begin position="918"/>
        <end position="928"/>
    </location>
</feature>
<feature type="compositionally biased region" description="Basic and acidic residues" evidence="1">
    <location>
        <begin position="938"/>
        <end position="952"/>
    </location>
</feature>
<feature type="modified residue" description="Phosphoserine" evidence="6">
    <location>
        <position position="623"/>
    </location>
</feature>
<feature type="modified residue" description="Phosphoserine" evidence="6">
    <location>
        <position position="980"/>
    </location>
</feature>
<feature type="sequence conflict" description="In Ref. 3; CAH10475." evidence="3" ref="3">
    <original>R</original>
    <variation>G</variation>
    <location>
        <position position="446"/>
    </location>
</feature>
<feature type="sequence conflict" description="In Ref. 3; CAH10475." evidence="3" ref="3">
    <original>I</original>
    <variation>V</variation>
    <location>
        <position position="794"/>
    </location>
</feature>
<protein>
    <recommendedName>
        <fullName evidence="3">BRD4-interacting chromatin-remodeling complex-associated protein-like</fullName>
    </recommendedName>
    <alternativeName>
        <fullName evidence="5">Glioma tumor suppressor candidate region gene 1 protein-like</fullName>
    </alternativeName>
</protein>
<sequence>MDDDDDSCLLDLIGDPQALNYFLHGPSNKSSNDDLTNAGYSAANSNSIFANSSNADPKSSLKGVSNQLGEGPSDGLPLSSSLQFLEDELESSPLPDLTEDQPFDILQKSLQEANITEQTLAEEAYLDASIGSSQQFAQAQLHPSSSASFTQASNVSNYSGQTLQPIGVTHVPVGASFASNTVGVQHGFMQHVGISVPSQHLSNSSQISGSGQIQLIGSFGNHPSMMTINNLDGSQIILKGSGQQAPSNVSGGLLVHRQTPNGNSLFGNSSSSPVAQPVTVPFNSTNFQTSLPVHNIIIQRGLAPNSNKVPINIQPKPIQMGQQNTYNVNNLGIQQHHVQQGISFASASSPQGSVVGPHMSVNIVNQQNTRKPVTSQAVSSTGGSIVIHSPMGQPHAPQSQFLIPTSLSVSSNSVHHVQTINGQLLQTQPSQLISGQVASEHVMLNRNSSNMLRTNQPYTGPMLNNQNTAVHLVSGQTFAASGSPVIANHASPQLVGGQMPLQQASPTVLHLSPGQSSVSQGRPGFATMPSVTSMSGPSRFPAVSSASTAHPSLGSAVQSGSSGSNFTGDQLTQPNRTPVPVSVSHRLPVSSSKSTSTFSNTPGTGTQQQFFCQAQKKCLNQTSPISAPKTTDGLRQAQIPGLLSTTLPGQDSGSKVISASLGTAQPQQEKVVGSSPGHPAVQVESHSGGQKRPAAKQLTKGAFILQQLQRDQAHTVTPDKSHFRSLSDAVQRLLSYHVCQGSMPTEEDLRKVDNEFETVATQLLKRTQAMLNKYRCLLLEDAMRINPSAEMVMIDRMFNQEERASLSRDKRLALVDPEGFQADFCCSFKLDKAAHETQFGRSDQHGSKASSSLQPPAKAQGRDRAKTGVTEPMNHDQFHLVPNHIVVSAEGNISKKTECLGRALKFDKVGLVQYQSTSEEKASRREPLKASQCSPGPEGHRKTSSRSDHGTESKLSSILADSHLEMTCNNSFQDKSLRNSPKNEVLHTDIMKGSGEPQPDLQLTKSLETTFKNILELKKAGRQPQSDPTVSGSVELDFPNFSPMASQENCLEKFIPDHSEGVVETDSILEAAVNSILEC</sequence>
<name>BICRL_HUMAN</name>
<keyword id="KW-0597">Phosphoprotein</keyword>
<keyword id="KW-1267">Proteomics identification</keyword>
<keyword id="KW-1185">Reference proteome</keyword>
<gene>
    <name evidence="5" type="primary">BICRAL</name>
    <name evidence="5" type="synonym">GLTSCR1L</name>
    <name evidence="4" type="synonym">KIAA0240</name>
</gene>
<reference key="1">
    <citation type="journal article" date="1996" name="DNA Res.">
        <title>Prediction of the coding sequences of unidentified human genes. VI. The coding sequences of 80 new genes (KIAA0201-KIAA0280) deduced by analysis of cDNA clones from cell line KG-1 and brain.</title>
        <authorList>
            <person name="Nagase T."/>
            <person name="Seki N."/>
            <person name="Ishikawa K."/>
            <person name="Ohira M."/>
            <person name="Kawarabayasi Y."/>
            <person name="Ohara O."/>
            <person name="Tanaka A."/>
            <person name="Kotani H."/>
            <person name="Miyajima N."/>
            <person name="Nomura N."/>
        </authorList>
    </citation>
    <scope>NUCLEOTIDE SEQUENCE [LARGE SCALE MRNA]</scope>
    <source>
        <tissue>Brain</tissue>
    </source>
</reference>
<reference key="2">
    <citation type="submission" date="2005-08" db="EMBL/GenBank/DDBJ databases">
        <authorList>
            <person name="Ohara O."/>
            <person name="Nagase T."/>
            <person name="Kikuno R."/>
            <person name="Nomura N."/>
        </authorList>
    </citation>
    <scope>SEQUENCE REVISION</scope>
</reference>
<reference key="3">
    <citation type="journal article" date="2007" name="BMC Genomics">
        <title>The full-ORF clone resource of the German cDNA consortium.</title>
        <authorList>
            <person name="Bechtel S."/>
            <person name="Rosenfelder H."/>
            <person name="Duda A."/>
            <person name="Schmidt C.P."/>
            <person name="Ernst U."/>
            <person name="Wellenreuther R."/>
            <person name="Mehrle A."/>
            <person name="Schuster C."/>
            <person name="Bahr A."/>
            <person name="Bloecker H."/>
            <person name="Heubner D."/>
            <person name="Hoerlein A."/>
            <person name="Michel G."/>
            <person name="Wedler H."/>
            <person name="Koehrer K."/>
            <person name="Ottenwaelder B."/>
            <person name="Poustka A."/>
            <person name="Wiemann S."/>
            <person name="Schupp I."/>
        </authorList>
    </citation>
    <scope>NUCLEOTIDE SEQUENCE [LARGE SCALE MRNA]</scope>
    <source>
        <tissue>Amygdala</tissue>
    </source>
</reference>
<reference key="4">
    <citation type="journal article" date="2003" name="Nature">
        <title>The DNA sequence and analysis of human chromosome 6.</title>
        <authorList>
            <person name="Mungall A.J."/>
            <person name="Palmer S.A."/>
            <person name="Sims S.K."/>
            <person name="Edwards C.A."/>
            <person name="Ashurst J.L."/>
            <person name="Wilming L."/>
            <person name="Jones M.C."/>
            <person name="Horton R."/>
            <person name="Hunt S.E."/>
            <person name="Scott C.E."/>
            <person name="Gilbert J.G.R."/>
            <person name="Clamp M.E."/>
            <person name="Bethel G."/>
            <person name="Milne S."/>
            <person name="Ainscough R."/>
            <person name="Almeida J.P."/>
            <person name="Ambrose K.D."/>
            <person name="Andrews T.D."/>
            <person name="Ashwell R.I.S."/>
            <person name="Babbage A.K."/>
            <person name="Bagguley C.L."/>
            <person name="Bailey J."/>
            <person name="Banerjee R."/>
            <person name="Barker D.J."/>
            <person name="Barlow K.F."/>
            <person name="Bates K."/>
            <person name="Beare D.M."/>
            <person name="Beasley H."/>
            <person name="Beasley O."/>
            <person name="Bird C.P."/>
            <person name="Blakey S.E."/>
            <person name="Bray-Allen S."/>
            <person name="Brook J."/>
            <person name="Brown A.J."/>
            <person name="Brown J.Y."/>
            <person name="Burford D.C."/>
            <person name="Burrill W."/>
            <person name="Burton J."/>
            <person name="Carder C."/>
            <person name="Carter N.P."/>
            <person name="Chapman J.C."/>
            <person name="Clark S.Y."/>
            <person name="Clark G."/>
            <person name="Clee C.M."/>
            <person name="Clegg S."/>
            <person name="Cobley V."/>
            <person name="Collier R.E."/>
            <person name="Collins J.E."/>
            <person name="Colman L.K."/>
            <person name="Corby N.R."/>
            <person name="Coville G.J."/>
            <person name="Culley K.M."/>
            <person name="Dhami P."/>
            <person name="Davies J."/>
            <person name="Dunn M."/>
            <person name="Earthrowl M.E."/>
            <person name="Ellington A.E."/>
            <person name="Evans K.A."/>
            <person name="Faulkner L."/>
            <person name="Francis M.D."/>
            <person name="Frankish A."/>
            <person name="Frankland J."/>
            <person name="French L."/>
            <person name="Garner P."/>
            <person name="Garnett J."/>
            <person name="Ghori M.J."/>
            <person name="Gilby L.M."/>
            <person name="Gillson C.J."/>
            <person name="Glithero R.J."/>
            <person name="Grafham D.V."/>
            <person name="Grant M."/>
            <person name="Gribble S."/>
            <person name="Griffiths C."/>
            <person name="Griffiths M.N.D."/>
            <person name="Hall R."/>
            <person name="Halls K.S."/>
            <person name="Hammond S."/>
            <person name="Harley J.L."/>
            <person name="Hart E.A."/>
            <person name="Heath P.D."/>
            <person name="Heathcott R."/>
            <person name="Holmes S.J."/>
            <person name="Howden P.J."/>
            <person name="Howe K.L."/>
            <person name="Howell G.R."/>
            <person name="Huckle E."/>
            <person name="Humphray S.J."/>
            <person name="Humphries M.D."/>
            <person name="Hunt A.R."/>
            <person name="Johnson C.M."/>
            <person name="Joy A.A."/>
            <person name="Kay M."/>
            <person name="Keenan S.J."/>
            <person name="Kimberley A.M."/>
            <person name="King A."/>
            <person name="Laird G.K."/>
            <person name="Langford C."/>
            <person name="Lawlor S."/>
            <person name="Leongamornlert D.A."/>
            <person name="Leversha M."/>
            <person name="Lloyd C.R."/>
            <person name="Lloyd D.M."/>
            <person name="Loveland J.E."/>
            <person name="Lovell J."/>
            <person name="Martin S."/>
            <person name="Mashreghi-Mohammadi M."/>
            <person name="Maslen G.L."/>
            <person name="Matthews L."/>
            <person name="McCann O.T."/>
            <person name="McLaren S.J."/>
            <person name="McLay K."/>
            <person name="McMurray A."/>
            <person name="Moore M.J.F."/>
            <person name="Mullikin J.C."/>
            <person name="Niblett D."/>
            <person name="Nickerson T."/>
            <person name="Novik K.L."/>
            <person name="Oliver K."/>
            <person name="Overton-Larty E.K."/>
            <person name="Parker A."/>
            <person name="Patel R."/>
            <person name="Pearce A.V."/>
            <person name="Peck A.I."/>
            <person name="Phillimore B.J.C.T."/>
            <person name="Phillips S."/>
            <person name="Plumb R.W."/>
            <person name="Porter K.M."/>
            <person name="Ramsey Y."/>
            <person name="Ranby S.A."/>
            <person name="Rice C.M."/>
            <person name="Ross M.T."/>
            <person name="Searle S.M."/>
            <person name="Sehra H.K."/>
            <person name="Sheridan E."/>
            <person name="Skuce C.D."/>
            <person name="Smith S."/>
            <person name="Smith M."/>
            <person name="Spraggon L."/>
            <person name="Squares S.L."/>
            <person name="Steward C.A."/>
            <person name="Sycamore N."/>
            <person name="Tamlyn-Hall G."/>
            <person name="Tester J."/>
            <person name="Theaker A.J."/>
            <person name="Thomas D.W."/>
            <person name="Thorpe A."/>
            <person name="Tracey A."/>
            <person name="Tromans A."/>
            <person name="Tubby B."/>
            <person name="Wall M."/>
            <person name="Wallis J.M."/>
            <person name="West A.P."/>
            <person name="White S.S."/>
            <person name="Whitehead S.L."/>
            <person name="Whittaker H."/>
            <person name="Wild A."/>
            <person name="Willey D.J."/>
            <person name="Wilmer T.E."/>
            <person name="Wood J.M."/>
            <person name="Wray P.W."/>
            <person name="Wyatt J.C."/>
            <person name="Young L."/>
            <person name="Younger R.M."/>
            <person name="Bentley D.R."/>
            <person name="Coulson A."/>
            <person name="Durbin R.M."/>
            <person name="Hubbard T."/>
            <person name="Sulston J.E."/>
            <person name="Dunham I."/>
            <person name="Rogers J."/>
            <person name="Beck S."/>
        </authorList>
    </citation>
    <scope>NUCLEOTIDE SEQUENCE [LARGE SCALE GENOMIC DNA]</scope>
</reference>
<reference key="5">
    <citation type="submission" date="2005-07" db="EMBL/GenBank/DDBJ databases">
        <authorList>
            <person name="Mural R.J."/>
            <person name="Istrail S."/>
            <person name="Sutton G.G."/>
            <person name="Florea L."/>
            <person name="Halpern A.L."/>
            <person name="Mobarry C.M."/>
            <person name="Lippert R."/>
            <person name="Walenz B."/>
            <person name="Shatkay H."/>
            <person name="Dew I."/>
            <person name="Miller J.R."/>
            <person name="Flanigan M.J."/>
            <person name="Edwards N.J."/>
            <person name="Bolanos R."/>
            <person name="Fasulo D."/>
            <person name="Halldorsson B.V."/>
            <person name="Hannenhalli S."/>
            <person name="Turner R."/>
            <person name="Yooseph S."/>
            <person name="Lu F."/>
            <person name="Nusskern D.R."/>
            <person name="Shue B.C."/>
            <person name="Zheng X.H."/>
            <person name="Zhong F."/>
            <person name="Delcher A.L."/>
            <person name="Huson D.H."/>
            <person name="Kravitz S.A."/>
            <person name="Mouchard L."/>
            <person name="Reinert K."/>
            <person name="Remington K.A."/>
            <person name="Clark A.G."/>
            <person name="Waterman M.S."/>
            <person name="Eichler E.E."/>
            <person name="Adams M.D."/>
            <person name="Hunkapiller M.W."/>
            <person name="Myers E.W."/>
            <person name="Venter J.C."/>
        </authorList>
    </citation>
    <scope>NUCLEOTIDE SEQUENCE [LARGE SCALE GENOMIC DNA]</scope>
</reference>
<reference key="6">
    <citation type="journal article" date="2004" name="Genome Res.">
        <title>The status, quality, and expansion of the NIH full-length cDNA project: the Mammalian Gene Collection (MGC).</title>
        <authorList>
            <consortium name="The MGC Project Team"/>
        </authorList>
    </citation>
    <scope>NUCLEOTIDE SEQUENCE [LARGE SCALE MRNA]</scope>
</reference>
<reference key="7">
    <citation type="journal article" date="2011" name="Sci. Signal.">
        <title>System-wide temporal characterization of the proteome and phosphoproteome of human embryonic stem cell differentiation.</title>
        <authorList>
            <person name="Rigbolt K.T."/>
            <person name="Prokhorova T.A."/>
            <person name="Akimov V."/>
            <person name="Henningsen J."/>
            <person name="Johansen P.T."/>
            <person name="Kratchmarova I."/>
            <person name="Kassem M."/>
            <person name="Mann M."/>
            <person name="Olsen J.V."/>
            <person name="Blagoev B."/>
        </authorList>
    </citation>
    <scope>IDENTIFICATION BY MASS SPECTROMETRY [LARGE SCALE ANALYSIS]</scope>
</reference>
<reference key="8">
    <citation type="journal article" date="2013" name="J. Proteome Res.">
        <title>Toward a comprehensive characterization of a human cancer cell phosphoproteome.</title>
        <authorList>
            <person name="Zhou H."/>
            <person name="Di Palma S."/>
            <person name="Preisinger C."/>
            <person name="Peng M."/>
            <person name="Polat A.N."/>
            <person name="Heck A.J."/>
            <person name="Mohammed S."/>
        </authorList>
    </citation>
    <scope>PHOSPHORYLATION [LARGE SCALE ANALYSIS] AT SER-623 AND SER-980</scope>
    <scope>IDENTIFICATION BY MASS SPECTROMETRY [LARGE SCALE ANALYSIS]</scope>
    <source>
        <tissue>Cervix carcinoma</tissue>
        <tissue>Erythroleukemia</tissue>
    </source>
</reference>
<reference key="9">
    <citation type="journal article" date="2018" name="J. Biol. Chem.">
        <title>Glioma tumor suppressor candidate region gene 1 (GLTSCR1) and its paralog GLTSCR1-like form SWI/SNF chromatin remodeling subcomplexes.</title>
        <authorList>
            <person name="Alpsoy A."/>
            <person name="Dykhuizen E.C."/>
        </authorList>
    </citation>
    <scope>FUNCTION</scope>
    <scope>IDENTIFICATION IN THE GBAF COMPLEX</scope>
</reference>
<proteinExistence type="evidence at protein level"/>
<evidence type="ECO:0000256" key="1">
    <source>
        <dbReference type="SAM" id="MobiDB-lite"/>
    </source>
</evidence>
<evidence type="ECO:0000269" key="2">
    <source>
    </source>
</evidence>
<evidence type="ECO:0000305" key="3"/>
<evidence type="ECO:0000312" key="4">
    <source>
        <dbReference type="EMBL" id="BAA13246.2"/>
    </source>
</evidence>
<evidence type="ECO:0000312" key="5">
    <source>
        <dbReference type="HGNC" id="HGNC:21111"/>
    </source>
</evidence>
<evidence type="ECO:0007744" key="6">
    <source>
    </source>
</evidence>
<accession>Q6AI39</accession>
<accession>A1L3W2</accession>
<accession>Q5TFZ3</accession>
<accession>Q92514</accession>
<dbReference type="EMBL" id="D87077">
    <property type="protein sequence ID" value="BAA13246.2"/>
    <property type="status" value="ALT_INIT"/>
    <property type="molecule type" value="mRNA"/>
</dbReference>
<dbReference type="EMBL" id="CR627378">
    <property type="protein sequence ID" value="CAH10475.1"/>
    <property type="molecule type" value="mRNA"/>
</dbReference>
<dbReference type="EMBL" id="AL035587">
    <property type="status" value="NOT_ANNOTATED_CDS"/>
    <property type="molecule type" value="Genomic_DNA"/>
</dbReference>
<dbReference type="EMBL" id="AL353716">
    <property type="status" value="NOT_ANNOTATED_CDS"/>
    <property type="molecule type" value="Genomic_DNA"/>
</dbReference>
<dbReference type="EMBL" id="CH471081">
    <property type="protein sequence ID" value="EAX04102.1"/>
    <property type="molecule type" value="Genomic_DNA"/>
</dbReference>
<dbReference type="EMBL" id="BC130302">
    <property type="protein sequence ID" value="AAI30303.1"/>
    <property type="molecule type" value="mRNA"/>
</dbReference>
<dbReference type="CCDS" id="CCDS34451.1"/>
<dbReference type="RefSeq" id="NP_001305748.1">
    <property type="nucleotide sequence ID" value="NM_001318819.2"/>
</dbReference>
<dbReference type="RefSeq" id="NP_001380428.1">
    <property type="nucleotide sequence ID" value="NM_001393499.1"/>
</dbReference>
<dbReference type="RefSeq" id="NP_056164.1">
    <property type="nucleotide sequence ID" value="NM_015349.3"/>
</dbReference>
<dbReference type="RefSeq" id="XP_024302158.1">
    <property type="nucleotide sequence ID" value="XM_024446390.2"/>
</dbReference>
<dbReference type="RefSeq" id="XP_054210936.1">
    <property type="nucleotide sequence ID" value="XM_054354961.1"/>
</dbReference>
<dbReference type="RefSeq" id="XP_054210937.1">
    <property type="nucleotide sequence ID" value="XM_054354962.1"/>
</dbReference>
<dbReference type="RefSeq" id="XP_054210938.1">
    <property type="nucleotide sequence ID" value="XM_054354963.1"/>
</dbReference>
<dbReference type="RefSeq" id="XP_054210939.1">
    <property type="nucleotide sequence ID" value="XM_054354964.1"/>
</dbReference>
<dbReference type="RefSeq" id="XP_054210940.1">
    <property type="nucleotide sequence ID" value="XM_054354965.1"/>
</dbReference>
<dbReference type="RefSeq" id="XP_054210941.1">
    <property type="nucleotide sequence ID" value="XM_054354966.1"/>
</dbReference>
<dbReference type="RefSeq" id="XP_054210942.1">
    <property type="nucleotide sequence ID" value="XM_054354967.1"/>
</dbReference>
<dbReference type="RefSeq" id="XP_054210943.1">
    <property type="nucleotide sequence ID" value="XM_054354968.1"/>
</dbReference>
<dbReference type="BioGRID" id="117053">
    <property type="interactions" value="43"/>
</dbReference>
<dbReference type="ComplexPortal" id="CPX-4203">
    <property type="entry name" value="GBAF (SWI/SNF) ATP-dependent chromatin remodeling complex, ACTL6A-BICRAL-SMARCA2 variant"/>
</dbReference>
<dbReference type="ComplexPortal" id="CPX-4207">
    <property type="entry name" value="GBAF (SWI/SNF) ATP-dependent chromatin remodeling complex, ACTL6A-BICRAL-SMARCA4 variant"/>
</dbReference>
<dbReference type="ComplexPortal" id="CPX-4224">
    <property type="entry name" value="GBAF (SWI/SNF) ATP-dependent chromatin remodeling complex, ACTL6B-BICRAL-SMARCA2 variant"/>
</dbReference>
<dbReference type="ComplexPortal" id="CPX-4226">
    <property type="entry name" value="GBAF (SWI/SNF) ATP-dependent chromatin remodeling complex, ACTL6B-BICRAL-SMARCA4 variant"/>
</dbReference>
<dbReference type="CORUM" id="Q6AI39"/>
<dbReference type="FunCoup" id="Q6AI39">
    <property type="interactions" value="1406"/>
</dbReference>
<dbReference type="IntAct" id="Q6AI39">
    <property type="interactions" value="36"/>
</dbReference>
<dbReference type="STRING" id="9606.ENSP00000313933"/>
<dbReference type="GlyCosmos" id="Q6AI39">
    <property type="glycosylation" value="7 sites, 2 glycans"/>
</dbReference>
<dbReference type="GlyGen" id="Q6AI39">
    <property type="glycosylation" value="9 sites, 2 O-linked glycans (9 sites)"/>
</dbReference>
<dbReference type="iPTMnet" id="Q6AI39"/>
<dbReference type="PhosphoSitePlus" id="Q6AI39"/>
<dbReference type="BioMuta" id="BICRAL"/>
<dbReference type="DMDM" id="114149731"/>
<dbReference type="jPOST" id="Q6AI39"/>
<dbReference type="MassIVE" id="Q6AI39"/>
<dbReference type="PaxDb" id="9606-ENSP00000313933"/>
<dbReference type="PeptideAtlas" id="Q6AI39"/>
<dbReference type="ProteomicsDB" id="66188"/>
<dbReference type="Pumba" id="Q6AI39"/>
<dbReference type="Antibodypedia" id="30175">
    <property type="antibodies" value="19 antibodies from 8 providers"/>
</dbReference>
<dbReference type="DNASU" id="23506"/>
<dbReference type="Ensembl" id="ENST00000314073.10">
    <property type="protein sequence ID" value="ENSP00000313933.4"/>
    <property type="gene ID" value="ENSG00000112624.14"/>
</dbReference>
<dbReference type="Ensembl" id="ENST00000394168.1">
    <property type="protein sequence ID" value="ENSP00000377723.1"/>
    <property type="gene ID" value="ENSG00000112624.14"/>
</dbReference>
<dbReference type="GeneID" id="23506"/>
<dbReference type="KEGG" id="hsa:23506"/>
<dbReference type="MANE-Select" id="ENST00000314073.10">
    <property type="protein sequence ID" value="ENSP00000313933.4"/>
    <property type="RefSeq nucleotide sequence ID" value="NM_001393499.1"/>
    <property type="RefSeq protein sequence ID" value="NP_001380428.1"/>
</dbReference>
<dbReference type="UCSC" id="uc003osn.2">
    <property type="organism name" value="human"/>
</dbReference>
<dbReference type="AGR" id="HGNC:21111"/>
<dbReference type="CTD" id="23506"/>
<dbReference type="DisGeNET" id="23506"/>
<dbReference type="GeneCards" id="BICRAL"/>
<dbReference type="HGNC" id="HGNC:21111">
    <property type="gene designation" value="BICRAL"/>
</dbReference>
<dbReference type="HPA" id="ENSG00000112624">
    <property type="expression patterns" value="Low tissue specificity"/>
</dbReference>
<dbReference type="MIM" id="618502">
    <property type="type" value="gene"/>
</dbReference>
<dbReference type="neXtProt" id="NX_Q6AI39"/>
<dbReference type="OpenTargets" id="ENSG00000112624"/>
<dbReference type="PharmGKB" id="PA134964468"/>
<dbReference type="VEuPathDB" id="HostDB:ENSG00000112624"/>
<dbReference type="eggNOG" id="ENOG502QPQ9">
    <property type="taxonomic scope" value="Eukaryota"/>
</dbReference>
<dbReference type="GeneTree" id="ENSGT00940000159766"/>
<dbReference type="HOGENOM" id="CLU_011632_0_0_1"/>
<dbReference type="InParanoid" id="Q6AI39"/>
<dbReference type="OMA" id="DQFHPVP"/>
<dbReference type="OrthoDB" id="2556847at2759"/>
<dbReference type="PAN-GO" id="Q6AI39">
    <property type="GO annotations" value="2 GO annotations based on evolutionary models"/>
</dbReference>
<dbReference type="PhylomeDB" id="Q6AI39"/>
<dbReference type="TreeFam" id="TF335495"/>
<dbReference type="PathwayCommons" id="Q6AI39"/>
<dbReference type="SignaLink" id="Q6AI39"/>
<dbReference type="BioGRID-ORCS" id="23506">
    <property type="hits" value="8 hits in 1154 CRISPR screens"/>
</dbReference>
<dbReference type="ChiTaRS" id="GLTSCR1L">
    <property type="organism name" value="human"/>
</dbReference>
<dbReference type="GenomeRNAi" id="23506"/>
<dbReference type="Pharos" id="Q6AI39">
    <property type="development level" value="Tdark"/>
</dbReference>
<dbReference type="PRO" id="PR:Q6AI39"/>
<dbReference type="Proteomes" id="UP000005640">
    <property type="component" value="Chromosome 6"/>
</dbReference>
<dbReference type="RNAct" id="Q6AI39">
    <property type="molecule type" value="protein"/>
</dbReference>
<dbReference type="Bgee" id="ENSG00000112624">
    <property type="expression patterns" value="Expressed in cerebellar vermis and 214 other cell types or tissues"/>
</dbReference>
<dbReference type="GO" id="GO:0000785">
    <property type="term" value="C:chromatin"/>
    <property type="evidence" value="ECO:0000303"/>
    <property type="project" value="ComplexPortal"/>
</dbReference>
<dbReference type="GO" id="GO:0140288">
    <property type="term" value="C:GBAF complex"/>
    <property type="evidence" value="ECO:0000303"/>
    <property type="project" value="ComplexPortal"/>
</dbReference>
<dbReference type="GO" id="GO:0016514">
    <property type="term" value="C:SWI/SNF complex"/>
    <property type="evidence" value="ECO:0000314"/>
    <property type="project" value="UniProtKB"/>
</dbReference>
<dbReference type="GO" id="GO:0006338">
    <property type="term" value="P:chromatin remodeling"/>
    <property type="evidence" value="ECO:0000303"/>
    <property type="project" value="ComplexPortal"/>
</dbReference>
<dbReference type="GO" id="GO:0045596">
    <property type="term" value="P:negative regulation of cell differentiation"/>
    <property type="evidence" value="ECO:0000303"/>
    <property type="project" value="ComplexPortal"/>
</dbReference>
<dbReference type="GO" id="GO:0008284">
    <property type="term" value="P:positive regulation of cell population proliferation"/>
    <property type="evidence" value="ECO:0000303"/>
    <property type="project" value="ComplexPortal"/>
</dbReference>
<dbReference type="GO" id="GO:0045893">
    <property type="term" value="P:positive regulation of DNA-templated transcription"/>
    <property type="evidence" value="ECO:0000318"/>
    <property type="project" value="GO_Central"/>
</dbReference>
<dbReference type="GO" id="GO:1902459">
    <property type="term" value="P:positive regulation of stem cell population maintenance"/>
    <property type="evidence" value="ECO:0000303"/>
    <property type="project" value="ComplexPortal"/>
</dbReference>
<dbReference type="GO" id="GO:0006357">
    <property type="term" value="P:regulation of transcription by RNA polymerase II"/>
    <property type="evidence" value="ECO:0000303"/>
    <property type="project" value="ComplexPortal"/>
</dbReference>
<dbReference type="InterPro" id="IPR052438">
    <property type="entry name" value="Chromatin_remod/trans_coact"/>
</dbReference>
<dbReference type="InterPro" id="IPR015671">
    <property type="entry name" value="GSCR1_dom"/>
</dbReference>
<dbReference type="PANTHER" id="PTHR15572:SF2">
    <property type="entry name" value="BRD4-INTERACTING CHROMATIN-REMODELING COMPLEX-ASSOCIATED PROTEIN-LIKE"/>
    <property type="match status" value="1"/>
</dbReference>
<dbReference type="PANTHER" id="PTHR15572">
    <property type="entry name" value="GLIOMA TUMOR SUPPRESSOR CANDIDATE REGION GENE 1"/>
    <property type="match status" value="1"/>
</dbReference>
<dbReference type="Pfam" id="PF15249">
    <property type="entry name" value="GLTSCR1"/>
    <property type="match status" value="1"/>
</dbReference>
<comment type="function">
    <text evidence="2">Component of SWI/SNF chromatin remodeling subcomplex GBAF that carries out key enzymatic activities, changing chromatin structure by altering DNA-histone contacts within a nucleosome in an ATP-dependent manner.</text>
</comment>
<comment type="subunit">
    <text evidence="2">Component of the multiprotein chromatin-remodeling complexes SWI/SNF: SWI/SNF-A (BAF), SWI/SNF-B (PBAF) and related complexes. The canonical complex contains a catalytic subunit (either SMARCA4/BRG1/BAF190A or SMARCA2/BRM/BAF190B) and at least SMARCE1, ACTL6A/BAF53, SMARCC1/BAF155, SMARCC2/BAF170, and SMARCB1/SNF5/BAF47. Other subunits specific to each of the complexes may also be present permitting several possible combinations developmentally and tissue specific. Component of the SWI/SNF (GBAF) subcomplex, which includes at least BICRA or BICRAL (mutually exclusive), BRD9, SS18, the core BAF subunits, SMARCA2/BRM, SMARCA4/BRG1/BAF190A, ACTL6A/BAF53, SMARCC1/BAF155, and SMARCD1/BAF60A.</text>
</comment>
<comment type="interaction">
    <interactant intactId="EBI-1012434">
        <id>Q6AI39</id>
    </interactant>
    <interactant intactId="EBI-10295284">
        <id>Q99819</id>
        <label>ARHGDIG</label>
    </interactant>
    <organismsDiffer>false</organismsDiffer>
    <experiments>3</experiments>
</comment>
<comment type="interaction">
    <interactant intactId="EBI-1012434">
        <id>Q6AI39</id>
    </interactant>
    <interactant intactId="EBI-930964">
        <id>P54253</id>
        <label>ATXN1</label>
    </interactant>
    <organismsDiffer>false</organismsDiffer>
    <experiments>3</experiments>
</comment>
<comment type="interaction">
    <interactant intactId="EBI-1012434">
        <id>Q6AI39</id>
    </interactant>
    <interactant intactId="EBI-11524452">
        <id>Q8N9N5-2</id>
        <label>BANP</label>
    </interactant>
    <organismsDiffer>false</organismsDiffer>
    <experiments>3</experiments>
</comment>
<comment type="interaction">
    <interactant intactId="EBI-1012434">
        <id>Q6AI39</id>
    </interactant>
    <interactant intactId="EBI-10229433">
        <id>Q13515</id>
        <label>BFSP2</label>
    </interactant>
    <organismsDiffer>false</organismsDiffer>
    <experiments>3</experiments>
</comment>
<comment type="interaction">
    <interactant intactId="EBI-1012434">
        <id>Q6AI39</id>
    </interactant>
    <interactant intactId="EBI-740376">
        <id>Q86UW9</id>
        <label>DTX2</label>
    </interactant>
    <organismsDiffer>false</organismsDiffer>
    <experiments>3</experiments>
</comment>
<comment type="interaction">
    <interactant intactId="EBI-1012434">
        <id>Q6AI39</id>
    </interactant>
    <interactant intactId="EBI-742102">
        <id>Q8IYI6</id>
        <label>EXOC8</label>
    </interactant>
    <organismsDiffer>false</organismsDiffer>
    <experiments>3</experiments>
</comment>
<comment type="interaction">
    <interactant intactId="EBI-1012434">
        <id>Q6AI39</id>
    </interactant>
    <interactant intactId="EBI-10242151">
        <id>Q53EP0-3</id>
        <label>FNDC3B</label>
    </interactant>
    <organismsDiffer>false</organismsDiffer>
    <experiments>3</experiments>
</comment>
<comment type="interaction">
    <interactant intactId="EBI-1012434">
        <id>Q6AI39</id>
    </interactant>
    <interactant intactId="EBI-740220">
        <id>O14964</id>
        <label>HGS</label>
    </interactant>
    <organismsDiffer>false</organismsDiffer>
    <experiments>3</experiments>
</comment>
<comment type="interaction">
    <interactant intactId="EBI-1012434">
        <id>Q6AI39</id>
    </interactant>
    <interactant intactId="EBI-739395">
        <id>Q16082</id>
        <label>HSPB2</label>
    </interactant>
    <organismsDiffer>false</organismsDiffer>
    <experiments>3</experiments>
</comment>
<comment type="interaction">
    <interactant intactId="EBI-1012434">
        <id>Q6AI39</id>
    </interactant>
    <interactant intactId="EBI-6165879">
        <id>Q96IV0</id>
        <label>NGLY1</label>
    </interactant>
    <organismsDiffer>false</organismsDiffer>
    <experiments>3</experiments>
</comment>
<comment type="interaction">
    <interactant intactId="EBI-1012434">
        <id>Q6AI39</id>
    </interactant>
    <interactant intactId="EBI-11742836">
        <id>Q16656-4</id>
        <label>NRF1</label>
    </interactant>
    <organismsDiffer>false</organismsDiffer>
    <experiments>3</experiments>
</comment>
<comment type="interaction">
    <interactant intactId="EBI-1012434">
        <id>Q6AI39</id>
    </interactant>
    <interactant intactId="EBI-12754095">
        <id>P86480</id>
        <label>PRR20D</label>
    </interactant>
    <organismsDiffer>false</organismsDiffer>
    <experiments>3</experiments>
</comment>
<comment type="interaction">
    <interactant intactId="EBI-1012434">
        <id>Q6AI39</id>
    </interactant>
    <interactant intactId="EBI-2798044">
        <id>Q2TAL8</id>
        <label>QRICH1</label>
    </interactant>
    <organismsDiffer>false</organismsDiffer>
    <experiments>3</experiments>
</comment>
<comment type="interaction">
    <interactant intactId="EBI-1012434">
        <id>Q6AI39</id>
    </interactant>
    <interactant intactId="EBI-12035119">
        <id>O75177-5</id>
        <label>SS18L1</label>
    </interactant>
    <organismsDiffer>false</organismsDiffer>
    <experiments>3</experiments>
</comment>
<comment type="interaction">
    <interactant intactId="EBI-1012434">
        <id>Q6AI39</id>
    </interactant>
    <interactant intactId="EBI-740098">
        <id>P36406</id>
        <label>TRIM23</label>
    </interactant>
    <organismsDiffer>false</organismsDiffer>
    <experiments>3</experiments>
</comment>
<comment type="interaction">
    <interactant intactId="EBI-1012434">
        <id>Q6AI39</id>
    </interactant>
    <interactant intactId="EBI-739895">
        <id>Q8N6Y0</id>
        <label>USHBP1</label>
    </interactant>
    <organismsDiffer>false</organismsDiffer>
    <experiments>3</experiments>
</comment>
<comment type="sequence caution" evidence="3">
    <conflict type="erroneous initiation">
        <sequence resource="EMBL-CDS" id="BAA13246"/>
    </conflict>
    <text>Extended N-terminus.</text>
</comment>
<organism>
    <name type="scientific">Homo sapiens</name>
    <name type="common">Human</name>
    <dbReference type="NCBI Taxonomy" id="9606"/>
    <lineage>
        <taxon>Eukaryota</taxon>
        <taxon>Metazoa</taxon>
        <taxon>Chordata</taxon>
        <taxon>Craniata</taxon>
        <taxon>Vertebrata</taxon>
        <taxon>Euteleostomi</taxon>
        <taxon>Mammalia</taxon>
        <taxon>Eutheria</taxon>
        <taxon>Euarchontoglires</taxon>
        <taxon>Primates</taxon>
        <taxon>Haplorrhini</taxon>
        <taxon>Catarrhini</taxon>
        <taxon>Hominidae</taxon>
        <taxon>Homo</taxon>
    </lineage>
</organism>